<organism>
    <name type="scientific">Salmonella typhimurium (strain LT2 / SGSC1412 / ATCC 700720)</name>
    <dbReference type="NCBI Taxonomy" id="99287"/>
    <lineage>
        <taxon>Bacteria</taxon>
        <taxon>Pseudomonadati</taxon>
        <taxon>Pseudomonadota</taxon>
        <taxon>Gammaproteobacteria</taxon>
        <taxon>Enterobacterales</taxon>
        <taxon>Enterobacteriaceae</taxon>
        <taxon>Salmonella</taxon>
    </lineage>
</organism>
<protein>
    <recommendedName>
        <fullName>DNA replication and repair protein RecF</fullName>
    </recommendedName>
</protein>
<feature type="initiator methionine" description="Removed" evidence="1">
    <location>
        <position position="1"/>
    </location>
</feature>
<feature type="chain" id="PRO_0000196452" description="DNA replication and repair protein RecF">
    <location>
        <begin position="2"/>
        <end position="357"/>
    </location>
</feature>
<feature type="binding site" evidence="2">
    <location>
        <begin position="30"/>
        <end position="37"/>
    </location>
    <ligand>
        <name>ATP</name>
        <dbReference type="ChEBI" id="CHEBI:30616"/>
    </ligand>
</feature>
<feature type="sequence conflict" description="In Ref. 1; CAA44366." evidence="3" ref="1">
    <original>ANG</original>
    <variation>PNA</variation>
    <location>
        <begin position="31"/>
        <end position="33"/>
    </location>
</feature>
<feature type="sequence conflict" description="In Ref. 1; CAA44366." evidence="3" ref="1">
    <original>EL</original>
    <variation>DV</variation>
    <location>
        <begin position="107"/>
        <end position="108"/>
    </location>
</feature>
<feature type="sequence conflict" description="In Ref. 1; CAA44366." evidence="3" ref="1">
    <original>N</original>
    <variation>T</variation>
    <location>
        <position position="126"/>
    </location>
</feature>
<feature type="sequence conflict" description="In Ref. 1; CAA44366." evidence="3" ref="1">
    <original>R</original>
    <variation>A</variation>
    <location>
        <position position="166"/>
    </location>
</feature>
<feature type="sequence conflict" description="In Ref. 1; CAA44366." evidence="3" ref="1">
    <original>IRA</original>
    <variation>MLC</variation>
    <location>
        <begin position="258"/>
        <end position="260"/>
    </location>
</feature>
<feature type="sequence conflict" description="In Ref. 1; CAA44366." evidence="3" ref="1">
    <original>E</original>
    <variation>Q</variation>
    <location>
        <position position="287"/>
    </location>
</feature>
<feature type="sequence conflict" description="In Ref. 1; CAA44366." evidence="3" ref="1">
    <location>
        <position position="296"/>
    </location>
</feature>
<feature type="sequence conflict" description="In Ref. 1; CAA44366." evidence="3" ref="1">
    <original>D</original>
    <variation>A</variation>
    <location>
        <position position="303"/>
    </location>
</feature>
<feature type="sequence conflict" description="In Ref. 1; CAA44366." evidence="3" ref="1">
    <original>A</original>
    <variation>G</variation>
    <location>
        <position position="311"/>
    </location>
</feature>
<feature type="sequence conflict" description="In Ref. 1; CAA44366." evidence="3" ref="1">
    <original>AIS</original>
    <variation>EL</variation>
    <location>
        <begin position="331"/>
        <end position="333"/>
    </location>
</feature>
<keyword id="KW-0067">ATP-binding</keyword>
<keyword id="KW-0963">Cytoplasm</keyword>
<keyword id="KW-0227">DNA damage</keyword>
<keyword id="KW-0234">DNA repair</keyword>
<keyword id="KW-0235">DNA replication</keyword>
<keyword id="KW-0238">DNA-binding</keyword>
<keyword id="KW-0547">Nucleotide-binding</keyword>
<keyword id="KW-1185">Reference proteome</keyword>
<keyword id="KW-0742">SOS response</keyword>
<gene>
    <name type="primary">recF</name>
    <name type="ordered locus">STM3836</name>
</gene>
<comment type="function">
    <text evidence="1">The RecF protein is involved in DNA metabolism; it is required for DNA replication and normal SOS inducibility. RecF binds preferentially to single-stranded, linear DNA. It also seems to bind ATP (By similarity).</text>
</comment>
<comment type="subcellular location">
    <subcellularLocation>
        <location evidence="1">Cytoplasm</location>
    </subcellularLocation>
</comment>
<comment type="similarity">
    <text evidence="3">Belongs to the RecF family.</text>
</comment>
<proteinExistence type="inferred from homology"/>
<evidence type="ECO:0000250" key="1"/>
<evidence type="ECO:0000255" key="2"/>
<evidence type="ECO:0000305" key="3"/>
<reference key="1">
    <citation type="journal article" date="1992" name="Nucleic Acids Res.">
        <title>Sequence and complementation analysis of recF genes from Escherichia coli, Salmonella typhimurium, Pseudomonas putida and Bacillus subtilis: evidence for an essential phosphate binding loop.</title>
        <authorList>
            <person name="Sandler S.J."/>
            <person name="Chackerian B."/>
            <person name="Li J.T."/>
            <person name="Clark A.J."/>
        </authorList>
    </citation>
    <scope>NUCLEOTIDE SEQUENCE [GENOMIC DNA]</scope>
</reference>
<reference key="2">
    <citation type="journal article" date="2001" name="Nature">
        <title>Complete genome sequence of Salmonella enterica serovar Typhimurium LT2.</title>
        <authorList>
            <person name="McClelland M."/>
            <person name="Sanderson K.E."/>
            <person name="Spieth J."/>
            <person name="Clifton S.W."/>
            <person name="Latreille P."/>
            <person name="Courtney L."/>
            <person name="Porwollik S."/>
            <person name="Ali J."/>
            <person name="Dante M."/>
            <person name="Du F."/>
            <person name="Hou S."/>
            <person name="Layman D."/>
            <person name="Leonard S."/>
            <person name="Nguyen C."/>
            <person name="Scott K."/>
            <person name="Holmes A."/>
            <person name="Grewal N."/>
            <person name="Mulvaney E."/>
            <person name="Ryan E."/>
            <person name="Sun H."/>
            <person name="Florea L."/>
            <person name="Miller W."/>
            <person name="Stoneking T."/>
            <person name="Nhan M."/>
            <person name="Waterston R."/>
            <person name="Wilson R.K."/>
        </authorList>
    </citation>
    <scope>NUCLEOTIDE SEQUENCE [LARGE SCALE GENOMIC DNA]</scope>
    <source>
        <strain>LT2 / SGSC1412 / ATCC 700720</strain>
    </source>
</reference>
<dbReference type="EMBL" id="X62505">
    <property type="protein sequence ID" value="CAA44366.1"/>
    <property type="molecule type" value="Genomic_DNA"/>
</dbReference>
<dbReference type="EMBL" id="AE006468">
    <property type="protein sequence ID" value="AAL22695.1"/>
    <property type="molecule type" value="Genomic_DNA"/>
</dbReference>
<dbReference type="PIR" id="S21057">
    <property type="entry name" value="S21057"/>
</dbReference>
<dbReference type="RefSeq" id="NP_462736.1">
    <property type="nucleotide sequence ID" value="NC_003197.2"/>
</dbReference>
<dbReference type="RefSeq" id="WP_000060085.1">
    <property type="nucleotide sequence ID" value="NC_003197.2"/>
</dbReference>
<dbReference type="SMR" id="P24900"/>
<dbReference type="STRING" id="99287.STM3836"/>
<dbReference type="PaxDb" id="99287-STM3836"/>
<dbReference type="GeneID" id="1255363"/>
<dbReference type="KEGG" id="stm:STM3836"/>
<dbReference type="PATRIC" id="fig|99287.12.peg.4063"/>
<dbReference type="HOGENOM" id="CLU_040267_0_0_6"/>
<dbReference type="OMA" id="GESWSYA"/>
<dbReference type="PhylomeDB" id="P24900"/>
<dbReference type="BioCyc" id="SENT99287:STM3836-MONOMER"/>
<dbReference type="Proteomes" id="UP000001014">
    <property type="component" value="Chromosome"/>
</dbReference>
<dbReference type="GO" id="GO:0005737">
    <property type="term" value="C:cytoplasm"/>
    <property type="evidence" value="ECO:0007669"/>
    <property type="project" value="UniProtKB-SubCell"/>
</dbReference>
<dbReference type="GO" id="GO:0005524">
    <property type="term" value="F:ATP binding"/>
    <property type="evidence" value="ECO:0007669"/>
    <property type="project" value="UniProtKB-UniRule"/>
</dbReference>
<dbReference type="GO" id="GO:0003697">
    <property type="term" value="F:single-stranded DNA binding"/>
    <property type="evidence" value="ECO:0007669"/>
    <property type="project" value="UniProtKB-UniRule"/>
</dbReference>
<dbReference type="GO" id="GO:0006260">
    <property type="term" value="P:DNA replication"/>
    <property type="evidence" value="ECO:0007669"/>
    <property type="project" value="UniProtKB-UniRule"/>
</dbReference>
<dbReference type="GO" id="GO:0000731">
    <property type="term" value="P:DNA synthesis involved in DNA repair"/>
    <property type="evidence" value="ECO:0000318"/>
    <property type="project" value="GO_Central"/>
</dbReference>
<dbReference type="GO" id="GO:0006302">
    <property type="term" value="P:double-strand break repair"/>
    <property type="evidence" value="ECO:0000318"/>
    <property type="project" value="GO_Central"/>
</dbReference>
<dbReference type="GO" id="GO:0009432">
    <property type="term" value="P:SOS response"/>
    <property type="evidence" value="ECO:0007669"/>
    <property type="project" value="UniProtKB-UniRule"/>
</dbReference>
<dbReference type="FunFam" id="1.20.1050.90:FF:000001">
    <property type="entry name" value="DNA replication and repair protein RecF"/>
    <property type="match status" value="1"/>
</dbReference>
<dbReference type="Gene3D" id="3.40.50.300">
    <property type="entry name" value="P-loop containing nucleotide triphosphate hydrolases"/>
    <property type="match status" value="1"/>
</dbReference>
<dbReference type="Gene3D" id="1.20.1050.90">
    <property type="entry name" value="RecF/RecN/SMC, N-terminal domain"/>
    <property type="match status" value="1"/>
</dbReference>
<dbReference type="HAMAP" id="MF_00365">
    <property type="entry name" value="RecF"/>
    <property type="match status" value="1"/>
</dbReference>
<dbReference type="InterPro" id="IPR001238">
    <property type="entry name" value="DNA-binding_RecF"/>
</dbReference>
<dbReference type="InterPro" id="IPR018078">
    <property type="entry name" value="DNA-binding_RecF_CS"/>
</dbReference>
<dbReference type="InterPro" id="IPR027417">
    <property type="entry name" value="P-loop_NTPase"/>
</dbReference>
<dbReference type="InterPro" id="IPR003395">
    <property type="entry name" value="RecF/RecN/SMC_N"/>
</dbReference>
<dbReference type="InterPro" id="IPR042174">
    <property type="entry name" value="RecF_2"/>
</dbReference>
<dbReference type="NCBIfam" id="TIGR00611">
    <property type="entry name" value="recf"/>
    <property type="match status" value="1"/>
</dbReference>
<dbReference type="PANTHER" id="PTHR32182">
    <property type="entry name" value="DNA REPLICATION AND REPAIR PROTEIN RECF"/>
    <property type="match status" value="1"/>
</dbReference>
<dbReference type="PANTHER" id="PTHR32182:SF0">
    <property type="entry name" value="DNA REPLICATION AND REPAIR PROTEIN RECF"/>
    <property type="match status" value="1"/>
</dbReference>
<dbReference type="Pfam" id="PF02463">
    <property type="entry name" value="SMC_N"/>
    <property type="match status" value="1"/>
</dbReference>
<dbReference type="SUPFAM" id="SSF52540">
    <property type="entry name" value="P-loop containing nucleoside triphosphate hydrolases"/>
    <property type="match status" value="1"/>
</dbReference>
<dbReference type="PROSITE" id="PS00617">
    <property type="entry name" value="RECF_1"/>
    <property type="match status" value="1"/>
</dbReference>
<dbReference type="PROSITE" id="PS00618">
    <property type="entry name" value="RECF_2"/>
    <property type="match status" value="1"/>
</dbReference>
<sequence>MSLTRLLIKDFRNIENADLALSPGFNFLVGANGSGKTSVLEAIYTLGHGRAFRSLQPGRVIRHEQEAFVLHGRLQSEERETSIGLTKDKQGDSKVRIDGTDGHKIAELAHLMPMQLITPEGFTLLNGGPKYRRAFLDWGCFHNEAGFFTAWSNLKRLLKQRNAALRQVSRYEQLRPWDKELIPLAEQISTWRAEYSSAIAQDMADTCQQFLPEFSLTFSFQRGWEKETDYADVLERSFERDRMLTYTAHGPHKADFRIRADGAPVEDTLSRGQLKLLMCALRLAQGEFLTRESGRRCLYLIDDFASELDDARRGLLASRLKATQSQVFVSAISAEHVIDMSDENSKMFTVEKGKITD</sequence>
<name>RECF_SALTY</name>
<accession>P24900</accession>